<evidence type="ECO:0000250" key="1"/>
<evidence type="ECO:0000250" key="2">
    <source>
        <dbReference type="UniProtKB" id="P19793"/>
    </source>
</evidence>
<evidence type="ECO:0000255" key="3">
    <source>
        <dbReference type="PROSITE-ProRule" id="PRU00407"/>
    </source>
</evidence>
<evidence type="ECO:0000255" key="4">
    <source>
        <dbReference type="PROSITE-ProRule" id="PRU01189"/>
    </source>
</evidence>
<evidence type="ECO:0000256" key="5">
    <source>
        <dbReference type="SAM" id="MobiDB-lite"/>
    </source>
</evidence>
<evidence type="ECO:0000269" key="6">
    <source>
    </source>
</evidence>
<evidence type="ECO:0000269" key="7">
    <source>
    </source>
</evidence>
<evidence type="ECO:0000305" key="8"/>
<evidence type="ECO:0007829" key="9">
    <source>
        <dbReference type="PDB" id="7A79"/>
    </source>
</evidence>
<protein>
    <recommendedName>
        <fullName>Retinoic acid receptor RXR-gamma</fullName>
    </recommendedName>
    <alternativeName>
        <fullName>Nuclear receptor subfamily 2 group B member 3</fullName>
    </alternativeName>
    <alternativeName>
        <fullName>Retinoid X receptor gamma</fullName>
    </alternativeName>
</protein>
<sequence>MYGNYSHFMKFPAGYGGSPGHTGSTSMSPSAALSTGKPMDSHPSYTDTPVSAPRTLSAVGTPLNALGSPYRVITSAMGPPSGALAAPPGINLVAPPSSQLNVVNSVSSSEDIKPLPGLPGIGNMNYPSTSPGSLVKHICAICGDRSSGKHYGVYSCEGCKGFFKRTIRKDLIYTCRDNKDCLIDKRQRNRCQYCRYQKCLVMGMKREAVQEERQRSRERAESEAECATSGHEDMPVERILEAELAVEPKTESYGDMNMENSTNDPVTNICHAADKQLFTLVEWAKRIPHFSDLTLEDQVILLRAGWNELLIASFSHRSVSVQDGILLATGLHVHRSSAHSAGVGSIFDRVLTELVSKMKDMQMDKSELGCLRAIVLFNPDAKGLSNPSEVETLREKVYATLEAYTKQKYPEQPGRFAKLLLRLPALRSIGLKCLEHLFFFKLIGDTPIDTFLMEMLETPLQIT</sequence>
<name>RXRG_HUMAN</name>
<dbReference type="EMBL" id="U38480">
    <property type="protein sequence ID" value="AAA80681.1"/>
    <property type="molecule type" value="mRNA"/>
</dbReference>
<dbReference type="EMBL" id="CR456705">
    <property type="protein sequence ID" value="CAG32986.1"/>
    <property type="molecule type" value="mRNA"/>
</dbReference>
<dbReference type="EMBL" id="AL160058">
    <property type="status" value="NOT_ANNOTATED_CDS"/>
    <property type="molecule type" value="Genomic_DNA"/>
</dbReference>
<dbReference type="EMBL" id="CH471067">
    <property type="protein sequence ID" value="EAW90745.1"/>
    <property type="molecule type" value="Genomic_DNA"/>
</dbReference>
<dbReference type="EMBL" id="BC012063">
    <property type="protein sequence ID" value="AAH12063.1"/>
    <property type="molecule type" value="mRNA"/>
</dbReference>
<dbReference type="CCDS" id="CCDS1248.1"/>
<dbReference type="RefSeq" id="NP_001243500.1">
    <property type="nucleotide sequence ID" value="NM_001256571.1"/>
</dbReference>
<dbReference type="RefSeq" id="NP_008848.1">
    <property type="nucleotide sequence ID" value="NM_006917.5"/>
</dbReference>
<dbReference type="PDB" id="2GL8">
    <property type="method" value="X-ray"/>
    <property type="resolution" value="2.40 A"/>
    <property type="chains" value="A/B/C/D=227-463"/>
</dbReference>
<dbReference type="PDB" id="7A79">
    <property type="method" value="X-ray"/>
    <property type="resolution" value="2.05 A"/>
    <property type="chains" value="A/B=233-463"/>
</dbReference>
<dbReference type="PDBsum" id="2GL8"/>
<dbReference type="PDBsum" id="7A79"/>
<dbReference type="SMR" id="P48443"/>
<dbReference type="BioGRID" id="112170">
    <property type="interactions" value="37"/>
</dbReference>
<dbReference type="CORUM" id="P48443"/>
<dbReference type="DIP" id="DIP-56220N"/>
<dbReference type="FunCoup" id="P48443">
    <property type="interactions" value="923"/>
</dbReference>
<dbReference type="IntAct" id="P48443">
    <property type="interactions" value="35"/>
</dbReference>
<dbReference type="MINT" id="P48443"/>
<dbReference type="STRING" id="9606.ENSP00000352900"/>
<dbReference type="BindingDB" id="P48443"/>
<dbReference type="ChEMBL" id="CHEMBL2004"/>
<dbReference type="DrugBank" id="DB00459">
    <property type="generic name" value="Acitretin"/>
</dbReference>
<dbReference type="DrugBank" id="DB00210">
    <property type="generic name" value="Adapalene"/>
</dbReference>
<dbReference type="DrugBank" id="DB00523">
    <property type="generic name" value="Alitretinoin"/>
</dbReference>
<dbReference type="DrugBank" id="DB00307">
    <property type="generic name" value="Bexarotene"/>
</dbReference>
<dbReference type="DrugBank" id="DB01393">
    <property type="generic name" value="Bezafibrate"/>
</dbReference>
<dbReference type="DrugBank" id="DB03756">
    <property type="generic name" value="Doconexent"/>
</dbReference>
<dbReference type="DrugBank" id="DB00926">
    <property type="generic name" value="Etretinate"/>
</dbReference>
<dbReference type="DrugBank" id="DB02746">
    <property type="generic name" value="Phthalic Acid"/>
</dbReference>
<dbReference type="DrugBank" id="DB00412">
    <property type="generic name" value="Rosiglitazone"/>
</dbReference>
<dbReference type="DrugBank" id="DB00755">
    <property type="generic name" value="Tretinoin"/>
</dbReference>
<dbReference type="DrugBank" id="DB00162">
    <property type="generic name" value="Vitamin A"/>
</dbReference>
<dbReference type="DrugBank" id="DB11806">
    <property type="generic name" value="VTP-194204"/>
</dbReference>
<dbReference type="DrugCentral" id="P48443"/>
<dbReference type="GuidetoPHARMACOLOGY" id="612"/>
<dbReference type="GlyGen" id="P48443">
    <property type="glycosylation" value="1 site, 1 O-linked glycan (1 site)"/>
</dbReference>
<dbReference type="iPTMnet" id="P48443"/>
<dbReference type="PhosphoSitePlus" id="P48443"/>
<dbReference type="BioMuta" id="RXRG"/>
<dbReference type="DMDM" id="1350913"/>
<dbReference type="jPOST" id="P48443"/>
<dbReference type="MassIVE" id="P48443"/>
<dbReference type="PaxDb" id="9606-ENSP00000352900"/>
<dbReference type="PeptideAtlas" id="P48443"/>
<dbReference type="ProteomicsDB" id="55890"/>
<dbReference type="Antibodypedia" id="3620">
    <property type="antibodies" value="412 antibodies from 42 providers"/>
</dbReference>
<dbReference type="DNASU" id="6258"/>
<dbReference type="Ensembl" id="ENST00000359842.10">
    <property type="protein sequence ID" value="ENSP00000352900.5"/>
    <property type="gene ID" value="ENSG00000143171.13"/>
</dbReference>
<dbReference type="GeneID" id="6258"/>
<dbReference type="KEGG" id="hsa:6258"/>
<dbReference type="MANE-Select" id="ENST00000359842.10">
    <property type="protein sequence ID" value="ENSP00000352900.5"/>
    <property type="RefSeq nucleotide sequence ID" value="NM_006917.5"/>
    <property type="RefSeq protein sequence ID" value="NP_008848.1"/>
</dbReference>
<dbReference type="UCSC" id="uc001gda.4">
    <property type="organism name" value="human"/>
</dbReference>
<dbReference type="AGR" id="HGNC:10479"/>
<dbReference type="CTD" id="6258"/>
<dbReference type="DisGeNET" id="6258"/>
<dbReference type="GeneCards" id="RXRG"/>
<dbReference type="HGNC" id="HGNC:10479">
    <property type="gene designation" value="RXRG"/>
</dbReference>
<dbReference type="HPA" id="ENSG00000143171">
    <property type="expression patterns" value="Tissue enhanced (pituitary gland, retina, skeletal muscle)"/>
</dbReference>
<dbReference type="MIM" id="180247">
    <property type="type" value="gene"/>
</dbReference>
<dbReference type="neXtProt" id="NX_P48443"/>
<dbReference type="OpenTargets" id="ENSG00000143171"/>
<dbReference type="PharmGKB" id="PA34892"/>
<dbReference type="VEuPathDB" id="HostDB:ENSG00000143171"/>
<dbReference type="eggNOG" id="KOG3575">
    <property type="taxonomic scope" value="Eukaryota"/>
</dbReference>
<dbReference type="GeneTree" id="ENSGT00940000161269"/>
<dbReference type="HOGENOM" id="CLU_007368_5_4_1"/>
<dbReference type="InParanoid" id="P48443"/>
<dbReference type="OMA" id="PNFQQMG"/>
<dbReference type="OrthoDB" id="5873264at2759"/>
<dbReference type="PAN-GO" id="P48443">
    <property type="GO annotations" value="8 GO annotations based on evolutionary models"/>
</dbReference>
<dbReference type="PhylomeDB" id="P48443"/>
<dbReference type="TreeFam" id="TF352097"/>
<dbReference type="PathwayCommons" id="P48443"/>
<dbReference type="Reactome" id="R-HSA-383280">
    <property type="pathway name" value="Nuclear Receptor transcription pathway"/>
</dbReference>
<dbReference type="Reactome" id="R-HSA-5362517">
    <property type="pathway name" value="Signaling by Retinoic Acid"/>
</dbReference>
<dbReference type="SignaLink" id="P48443"/>
<dbReference type="SIGNOR" id="P48443"/>
<dbReference type="BioGRID-ORCS" id="6258">
    <property type="hits" value="16 hits in 1182 CRISPR screens"/>
</dbReference>
<dbReference type="ChiTaRS" id="RXRG">
    <property type="organism name" value="human"/>
</dbReference>
<dbReference type="EvolutionaryTrace" id="P48443"/>
<dbReference type="GeneWiki" id="Retinoid_X_receptor_gamma"/>
<dbReference type="GenomeRNAi" id="6258"/>
<dbReference type="Pharos" id="P48443">
    <property type="development level" value="Tclin"/>
</dbReference>
<dbReference type="PRO" id="PR:P48443"/>
<dbReference type="Proteomes" id="UP000005640">
    <property type="component" value="Chromosome 1"/>
</dbReference>
<dbReference type="RNAct" id="P48443">
    <property type="molecule type" value="protein"/>
</dbReference>
<dbReference type="Bgee" id="ENSG00000143171">
    <property type="expression patterns" value="Expressed in hindlimb stylopod muscle and 110 other cell types or tissues"/>
</dbReference>
<dbReference type="ExpressionAtlas" id="P48443">
    <property type="expression patterns" value="baseline and differential"/>
</dbReference>
<dbReference type="GO" id="GO:0000785">
    <property type="term" value="C:chromatin"/>
    <property type="evidence" value="ECO:0000247"/>
    <property type="project" value="NTNU_SB"/>
</dbReference>
<dbReference type="GO" id="GO:0005737">
    <property type="term" value="C:cytoplasm"/>
    <property type="evidence" value="ECO:0007669"/>
    <property type="project" value="UniProtKB-SubCell"/>
</dbReference>
<dbReference type="GO" id="GO:0005654">
    <property type="term" value="C:nucleoplasm"/>
    <property type="evidence" value="ECO:0000304"/>
    <property type="project" value="Reactome"/>
</dbReference>
<dbReference type="GO" id="GO:0090575">
    <property type="term" value="C:RNA polymerase II transcription regulator complex"/>
    <property type="evidence" value="ECO:0000318"/>
    <property type="project" value="GO_Central"/>
</dbReference>
<dbReference type="GO" id="GO:0000981">
    <property type="term" value="F:DNA-binding transcription factor activity, RNA polymerase II-specific"/>
    <property type="evidence" value="ECO:0000247"/>
    <property type="project" value="NTNU_SB"/>
</dbReference>
<dbReference type="GO" id="GO:0140693">
    <property type="term" value="F:molecular condensate scaffold activity"/>
    <property type="evidence" value="ECO:0000314"/>
    <property type="project" value="DisProt"/>
</dbReference>
<dbReference type="GO" id="GO:0004879">
    <property type="term" value="F:nuclear receptor activity"/>
    <property type="evidence" value="ECO:0000318"/>
    <property type="project" value="GO_Central"/>
</dbReference>
<dbReference type="GO" id="GO:0003707">
    <property type="term" value="F:nuclear steroid receptor activity"/>
    <property type="evidence" value="ECO:0007669"/>
    <property type="project" value="InterPro"/>
</dbReference>
<dbReference type="GO" id="GO:0044323">
    <property type="term" value="F:retinoic acid-responsive element binding"/>
    <property type="evidence" value="ECO:0000318"/>
    <property type="project" value="GO_Central"/>
</dbReference>
<dbReference type="GO" id="GO:1990837">
    <property type="term" value="F:sequence-specific double-stranded DNA binding"/>
    <property type="evidence" value="ECO:0000314"/>
    <property type="project" value="ARUK-UCL"/>
</dbReference>
<dbReference type="GO" id="GO:0008270">
    <property type="term" value="F:zinc ion binding"/>
    <property type="evidence" value="ECO:0007669"/>
    <property type="project" value="UniProtKB-KW"/>
</dbReference>
<dbReference type="GO" id="GO:0030154">
    <property type="term" value="P:cell differentiation"/>
    <property type="evidence" value="ECO:0000318"/>
    <property type="project" value="GO_Central"/>
</dbReference>
<dbReference type="GO" id="GO:0007399">
    <property type="term" value="P:nervous system development"/>
    <property type="evidence" value="ECO:0000318"/>
    <property type="project" value="GO_Central"/>
</dbReference>
<dbReference type="GO" id="GO:0045944">
    <property type="term" value="P:positive regulation of transcription by RNA polymerase II"/>
    <property type="evidence" value="ECO:0000318"/>
    <property type="project" value="GO_Central"/>
</dbReference>
<dbReference type="GO" id="GO:0048384">
    <property type="term" value="P:retinoic acid receptor signaling pathway"/>
    <property type="evidence" value="ECO:0000318"/>
    <property type="project" value="GO_Central"/>
</dbReference>
<dbReference type="CDD" id="cd06956">
    <property type="entry name" value="NR_DBD_RXR"/>
    <property type="match status" value="1"/>
</dbReference>
<dbReference type="CDD" id="cd06943">
    <property type="entry name" value="NR_LBD_RXR_like"/>
    <property type="match status" value="1"/>
</dbReference>
<dbReference type="DisProt" id="DP02915"/>
<dbReference type="FunFam" id="1.10.565.10:FF:000002">
    <property type="entry name" value="Retinoic acid receptor RXR-alpha"/>
    <property type="match status" value="1"/>
</dbReference>
<dbReference type="FunFam" id="3.30.50.10:FF:000005">
    <property type="entry name" value="Retinoic acid receptor RXR-alpha"/>
    <property type="match status" value="1"/>
</dbReference>
<dbReference type="Gene3D" id="3.30.50.10">
    <property type="entry name" value="Erythroid Transcription Factor GATA-1, subunit A"/>
    <property type="match status" value="1"/>
</dbReference>
<dbReference type="Gene3D" id="1.10.565.10">
    <property type="entry name" value="Retinoid X Receptor"/>
    <property type="match status" value="1"/>
</dbReference>
<dbReference type="InterPro" id="IPR035500">
    <property type="entry name" value="NHR-like_dom_sf"/>
</dbReference>
<dbReference type="InterPro" id="IPR021780">
    <property type="entry name" value="Nuc_recep-AF1"/>
</dbReference>
<dbReference type="InterPro" id="IPR000536">
    <property type="entry name" value="Nucl_hrmn_rcpt_lig-bd"/>
</dbReference>
<dbReference type="InterPro" id="IPR050274">
    <property type="entry name" value="Nuclear_hormone_rcpt_NR2"/>
</dbReference>
<dbReference type="InterPro" id="IPR001723">
    <property type="entry name" value="Nuclear_hrmn_rcpt"/>
</dbReference>
<dbReference type="InterPro" id="IPR000003">
    <property type="entry name" value="Retinoid-X_rcpt/HNF4"/>
</dbReference>
<dbReference type="InterPro" id="IPR001628">
    <property type="entry name" value="Znf_hrmn_rcpt"/>
</dbReference>
<dbReference type="InterPro" id="IPR013088">
    <property type="entry name" value="Znf_NHR/GATA"/>
</dbReference>
<dbReference type="PANTHER" id="PTHR24083">
    <property type="entry name" value="NUCLEAR HORMONE RECEPTOR"/>
    <property type="match status" value="1"/>
</dbReference>
<dbReference type="Pfam" id="PF00104">
    <property type="entry name" value="Hormone_recep"/>
    <property type="match status" value="1"/>
</dbReference>
<dbReference type="Pfam" id="PF11825">
    <property type="entry name" value="Nuc_recep-AF1"/>
    <property type="match status" value="1"/>
</dbReference>
<dbReference type="Pfam" id="PF00105">
    <property type="entry name" value="zf-C4"/>
    <property type="match status" value="1"/>
</dbReference>
<dbReference type="PRINTS" id="PR00545">
    <property type="entry name" value="RETINOIDXR"/>
</dbReference>
<dbReference type="PRINTS" id="PR00398">
    <property type="entry name" value="STRDHORMONER"/>
</dbReference>
<dbReference type="PRINTS" id="PR00047">
    <property type="entry name" value="STROIDFINGER"/>
</dbReference>
<dbReference type="SMART" id="SM00430">
    <property type="entry name" value="HOLI"/>
    <property type="match status" value="1"/>
</dbReference>
<dbReference type="SMART" id="SM00399">
    <property type="entry name" value="ZnF_C4"/>
    <property type="match status" value="1"/>
</dbReference>
<dbReference type="SUPFAM" id="SSF57716">
    <property type="entry name" value="Glucocorticoid receptor-like (DNA-binding domain)"/>
    <property type="match status" value="1"/>
</dbReference>
<dbReference type="SUPFAM" id="SSF48508">
    <property type="entry name" value="Nuclear receptor ligand-binding domain"/>
    <property type="match status" value="1"/>
</dbReference>
<dbReference type="PROSITE" id="PS51843">
    <property type="entry name" value="NR_LBD"/>
    <property type="match status" value="1"/>
</dbReference>
<dbReference type="PROSITE" id="PS00031">
    <property type="entry name" value="NUCLEAR_REC_DBD_1"/>
    <property type="match status" value="1"/>
</dbReference>
<dbReference type="PROSITE" id="PS51030">
    <property type="entry name" value="NUCLEAR_REC_DBD_2"/>
    <property type="match status" value="1"/>
</dbReference>
<gene>
    <name type="primary">RXRG</name>
    <name type="synonym">NR2B3</name>
</gene>
<accession>P48443</accession>
<accession>A6NIP1</accession>
<accession>Q6IBU7</accession>
<comment type="function">
    <text evidence="1">Receptor for retinoic acid. Retinoic acid receptors bind as heterodimers to their target response elements in response to their ligands, all-trans or 9-cis retinoic acid, and regulate gene expression in various biological processes. The RAR/RXR heterodimers bind to the retinoic acid response elements (RARE) composed of tandem 5'-AGGTCA-3' sites known as DR1-DR5. The high affinity ligand for RXRs is 9-cis retinoic acid (By similarity).</text>
</comment>
<comment type="subunit">
    <text evidence="2 7">Homodimer (By similarity). Heterodimer with a RAR molecule (PubMed:28167758). Binds DNA preferentially as a RAR/RXR heterodimer (PubMed:28167758). Interacts with RARA (PubMed:28167758).</text>
</comment>
<comment type="interaction">
    <interactant intactId="EBI-712405">
        <id>P48443</id>
    </interactant>
    <interactant intactId="EBI-1050662">
        <id>P12532</id>
        <label>CKMT1B</label>
    </interactant>
    <organismsDiffer>false</organismsDiffer>
    <experiments>5</experiments>
</comment>
<comment type="interaction">
    <interactant intactId="EBI-712405">
        <id>P48443</id>
    </interactant>
    <interactant intactId="EBI-6875961">
        <id>P02489</id>
        <label>CRYAA</label>
    </interactant>
    <organismsDiffer>false</organismsDiffer>
    <experiments>3</experiments>
</comment>
<comment type="interaction">
    <interactant intactId="EBI-712405">
        <id>P48443</id>
    </interactant>
    <interactant intactId="EBI-10976677">
        <id>G5E9A7</id>
        <label>DMWD</label>
    </interactant>
    <organismsDiffer>false</organismsDiffer>
    <experiments>3</experiments>
</comment>
<comment type="interaction">
    <interactant intactId="EBI-712405">
        <id>P48443</id>
    </interactant>
    <interactant intactId="EBI-356015">
        <id>Q14204</id>
        <label>DYNC1H1</label>
    </interactant>
    <organismsDiffer>false</organismsDiffer>
    <experiments>3</experiments>
</comment>
<comment type="interaction">
    <interactant intactId="EBI-712405">
        <id>P48443</id>
    </interactant>
    <interactant intactId="EBI-25913156">
        <id>O14908-2</id>
        <label>GIPC1</label>
    </interactant>
    <organismsDiffer>false</organismsDiffer>
    <experiments>3</experiments>
</comment>
<comment type="interaction">
    <interactant intactId="EBI-712405">
        <id>P48443</id>
    </interactant>
    <interactant intactId="EBI-466029">
        <id>P42858</id>
        <label>HTT</label>
    </interactant>
    <organismsDiffer>false</organismsDiffer>
    <experiments>18</experiments>
</comment>
<comment type="interaction">
    <interactant intactId="EBI-712405">
        <id>P48443</id>
    </interactant>
    <interactant intactId="EBI-2350461">
        <id>Q15777</id>
        <label>MPPED2</label>
    </interactant>
    <organismsDiffer>false</organismsDiffer>
    <experiments>6</experiments>
</comment>
<comment type="interaction">
    <interactant intactId="EBI-712405">
        <id>P48443</id>
    </interactant>
    <interactant intactId="EBI-10177172">
        <id>F1D8P7</id>
        <label>NR1H2</label>
    </interactant>
    <organismsDiffer>false</organismsDiffer>
    <experiments>14</experiments>
</comment>
<comment type="interaction">
    <interactant intactId="EBI-712405">
        <id>P48443</id>
    </interactant>
    <interactant intactId="EBI-745354">
        <id>P55055</id>
        <label>NR1H2</label>
    </interactant>
    <organismsDiffer>false</organismsDiffer>
    <experiments>6</experiments>
</comment>
<comment type="interaction">
    <interactant intactId="EBI-712405">
        <id>P48443</id>
    </interactant>
    <interactant intactId="EBI-781356">
        <id>Q13133</id>
        <label>NR1H3</label>
    </interactant>
    <organismsDiffer>false</organismsDiffer>
    <experiments>7</experiments>
</comment>
<comment type="interaction">
    <interactant intactId="EBI-712405">
        <id>P48443</id>
    </interactant>
    <interactant intactId="EBI-11952806">
        <id>Q13133-3</id>
        <label>NR1H3</label>
    </interactant>
    <organismsDiffer>false</organismsDiffer>
    <experiments>11</experiments>
</comment>
<comment type="interaction">
    <interactant intactId="EBI-712405">
        <id>P48443</id>
    </interactant>
    <interactant intactId="EBI-12417284">
        <id>Q96RI1-1</id>
        <label>NR1H4</label>
    </interactant>
    <organismsDiffer>false</organismsDiffer>
    <experiments>3</experiments>
</comment>
<comment type="interaction">
    <interactant intactId="EBI-712405">
        <id>P48443</id>
    </interactant>
    <interactant intactId="EBI-79165">
        <id>Q9NRD5</id>
        <label>PICK1</label>
    </interactant>
    <organismsDiffer>false</organismsDiffer>
    <experiments>3</experiments>
</comment>
<comment type="interaction">
    <interactant intactId="EBI-712405">
        <id>P48443</id>
    </interactant>
    <interactant intactId="EBI-413374">
        <id>P10276</id>
        <label>RARA</label>
    </interactant>
    <organismsDiffer>false</organismsDiffer>
    <experiments>18</experiments>
</comment>
<comment type="interaction">
    <interactant intactId="EBI-712405">
        <id>P48443</id>
    </interactant>
    <interactant intactId="EBI-10197061">
        <id>P10276-2</id>
        <label>RARA</label>
    </interactant>
    <organismsDiffer>false</organismsDiffer>
    <experiments>6</experiments>
</comment>
<comment type="interaction">
    <interactant intactId="EBI-712405">
        <id>P48443</id>
    </interactant>
    <interactant intactId="EBI-8583223">
        <id>P10826-2</id>
        <label>RARB</label>
    </interactant>
    <organismsDiffer>false</organismsDiffer>
    <experiments>7</experiments>
</comment>
<comment type="interaction">
    <interactant intactId="EBI-712405">
        <id>P48443</id>
    </interactant>
    <interactant intactId="EBI-2568901">
        <id>P13631</id>
        <label>RARG</label>
    </interactant>
    <organismsDiffer>false</organismsDiffer>
    <experiments>5</experiments>
</comment>
<comment type="interaction">
    <interactant intactId="EBI-712405">
        <id>P48443</id>
    </interactant>
    <interactant intactId="EBI-5235340">
        <id>Q7Z699</id>
        <label>SPRED1</label>
    </interactant>
    <organismsDiffer>false</organismsDiffer>
    <experiments>3</experiments>
</comment>
<comment type="interaction">
    <interactant intactId="EBI-712405">
        <id>P48443</id>
    </interactant>
    <interactant intactId="EBI-12806590">
        <id>Q86WV8</id>
        <label>TSC1</label>
    </interactant>
    <organismsDiffer>false</organismsDiffer>
    <experiments>3</experiments>
</comment>
<comment type="interaction">
    <interactant intactId="EBI-712405">
        <id>P48443</id>
    </interactant>
    <interactant intactId="EBI-12874016">
        <id>P11473-2</id>
        <label>VDR</label>
    </interactant>
    <organismsDiffer>false</organismsDiffer>
    <experiments>4</experiments>
</comment>
<comment type="interaction">
    <interactant intactId="EBI-712405">
        <id>P48443</id>
    </interactant>
    <interactant intactId="EBI-1565930">
        <id>Q91XC0</id>
        <label>Ajuba</label>
    </interactant>
    <organismsDiffer>true</organismsDiffer>
    <experiments>2</experiments>
</comment>
<comment type="subcellular location">
    <subcellularLocation>
        <location evidence="3 7">Nucleus</location>
    </subcellularLocation>
    <subcellularLocation>
        <location evidence="7">Cytoplasm</location>
    </subcellularLocation>
</comment>
<comment type="tissue specificity">
    <text evidence="7">Expressed in aortic endothelial cells (at protein level).</text>
</comment>
<comment type="domain">
    <text evidence="1">Composed of three domains: a modulating N-terminal domain, a DNA-binding domain and a C-terminal ligand-binding domain.</text>
</comment>
<comment type="PTM">
    <text evidence="6">Acetylated by EP300.</text>
</comment>
<comment type="similarity">
    <text evidence="8">Belongs to the nuclear hormone receptor family. NR2 subfamily.</text>
</comment>
<feature type="chain" id="PRO_0000053576" description="Retinoic acid receptor RXR-gamma">
    <location>
        <begin position="1"/>
        <end position="463"/>
    </location>
</feature>
<feature type="domain" description="NR LBD" evidence="4">
    <location>
        <begin position="231"/>
        <end position="459"/>
    </location>
</feature>
<feature type="DNA-binding region" description="Nuclear receptor" evidence="3">
    <location>
        <begin position="136"/>
        <end position="211"/>
    </location>
</feature>
<feature type="zinc finger region" description="NR C4-type" evidence="3">
    <location>
        <begin position="139"/>
        <end position="159"/>
    </location>
</feature>
<feature type="zinc finger region" description="NR C4-type" evidence="3">
    <location>
        <begin position="175"/>
        <end position="199"/>
    </location>
</feature>
<feature type="region of interest" description="Modulating" evidence="1">
    <location>
        <begin position="1"/>
        <end position="138"/>
    </location>
</feature>
<feature type="region of interest" description="Disordered" evidence="5">
    <location>
        <begin position="18"/>
        <end position="53"/>
    </location>
</feature>
<feature type="region of interest" description="Hinge">
    <location>
        <begin position="205"/>
        <end position="230"/>
    </location>
</feature>
<feature type="compositionally biased region" description="Polar residues" evidence="5">
    <location>
        <begin position="21"/>
        <end position="33"/>
    </location>
</feature>
<feature type="helix" evidence="9">
    <location>
        <begin position="236"/>
        <end position="245"/>
    </location>
</feature>
<feature type="helix" evidence="9">
    <location>
        <begin position="265"/>
        <end position="286"/>
    </location>
</feature>
<feature type="helix" evidence="9">
    <location>
        <begin position="290"/>
        <end position="292"/>
    </location>
</feature>
<feature type="helix" evidence="9">
    <location>
        <begin position="295"/>
        <end position="317"/>
    </location>
</feature>
<feature type="helix" evidence="9">
    <location>
        <begin position="318"/>
        <end position="320"/>
    </location>
</feature>
<feature type="strand" evidence="9">
    <location>
        <begin position="321"/>
        <end position="326"/>
    </location>
</feature>
<feature type="strand" evidence="9">
    <location>
        <begin position="332"/>
        <end position="334"/>
    </location>
</feature>
<feature type="helix" evidence="9">
    <location>
        <begin position="335"/>
        <end position="340"/>
    </location>
</feature>
<feature type="helix" evidence="9">
    <location>
        <begin position="344"/>
        <end position="353"/>
    </location>
</feature>
<feature type="helix" evidence="9">
    <location>
        <begin position="355"/>
        <end position="361"/>
    </location>
</feature>
<feature type="helix" evidence="9">
    <location>
        <begin position="365"/>
        <end position="376"/>
    </location>
</feature>
<feature type="helix" evidence="9">
    <location>
        <begin position="387"/>
        <end position="408"/>
    </location>
</feature>
<feature type="helix" evidence="9">
    <location>
        <begin position="415"/>
        <end position="420"/>
    </location>
</feature>
<feature type="helix" evidence="9">
    <location>
        <begin position="423"/>
        <end position="443"/>
    </location>
</feature>
<feature type="helix" evidence="9">
    <location>
        <begin position="450"/>
        <end position="456"/>
    </location>
</feature>
<proteinExistence type="evidence at protein level"/>
<organism>
    <name type="scientific">Homo sapiens</name>
    <name type="common">Human</name>
    <dbReference type="NCBI Taxonomy" id="9606"/>
    <lineage>
        <taxon>Eukaryota</taxon>
        <taxon>Metazoa</taxon>
        <taxon>Chordata</taxon>
        <taxon>Craniata</taxon>
        <taxon>Vertebrata</taxon>
        <taxon>Euteleostomi</taxon>
        <taxon>Mammalia</taxon>
        <taxon>Eutheria</taxon>
        <taxon>Euarchontoglires</taxon>
        <taxon>Primates</taxon>
        <taxon>Haplorrhini</taxon>
        <taxon>Catarrhini</taxon>
        <taxon>Hominidae</taxon>
        <taxon>Homo</taxon>
    </lineage>
</organism>
<keyword id="KW-0002">3D-structure</keyword>
<keyword id="KW-0007">Acetylation</keyword>
<keyword id="KW-0963">Cytoplasm</keyword>
<keyword id="KW-0238">DNA-binding</keyword>
<keyword id="KW-0479">Metal-binding</keyword>
<keyword id="KW-0539">Nucleus</keyword>
<keyword id="KW-1267">Proteomics identification</keyword>
<keyword id="KW-0675">Receptor</keyword>
<keyword id="KW-1185">Reference proteome</keyword>
<keyword id="KW-0804">Transcription</keyword>
<keyword id="KW-0805">Transcription regulation</keyword>
<keyword id="KW-0862">Zinc</keyword>
<keyword id="KW-0863">Zinc-finger</keyword>
<reference key="1">
    <citation type="submission" date="1995-10" db="EMBL/GenBank/DDBJ databases">
        <authorList>
            <person name="Cooke T.A."/>
            <person name="Allegretto E.A."/>
            <person name="Heyman R.A."/>
            <person name="Lamph W.W."/>
        </authorList>
    </citation>
    <scope>NUCLEOTIDE SEQUENCE [MRNA]</scope>
    <source>
        <tissue>Heart</tissue>
    </source>
</reference>
<reference key="2">
    <citation type="submission" date="2004-06" db="EMBL/GenBank/DDBJ databases">
        <title>Cloning of human full open reading frames in Gateway(TM) system entry vector (pDONR201).</title>
        <authorList>
            <person name="Ebert L."/>
            <person name="Schick M."/>
            <person name="Neubert P."/>
            <person name="Schatten R."/>
            <person name="Henze S."/>
            <person name="Korn B."/>
        </authorList>
    </citation>
    <scope>NUCLEOTIDE SEQUENCE [LARGE SCALE MRNA]</scope>
</reference>
<reference key="3">
    <citation type="journal article" date="2006" name="Nature">
        <title>The DNA sequence and biological annotation of human chromosome 1.</title>
        <authorList>
            <person name="Gregory S.G."/>
            <person name="Barlow K.F."/>
            <person name="McLay K.E."/>
            <person name="Kaul R."/>
            <person name="Swarbreck D."/>
            <person name="Dunham A."/>
            <person name="Scott C.E."/>
            <person name="Howe K.L."/>
            <person name="Woodfine K."/>
            <person name="Spencer C.C.A."/>
            <person name="Jones M.C."/>
            <person name="Gillson C."/>
            <person name="Searle S."/>
            <person name="Zhou Y."/>
            <person name="Kokocinski F."/>
            <person name="McDonald L."/>
            <person name="Evans R."/>
            <person name="Phillips K."/>
            <person name="Atkinson A."/>
            <person name="Cooper R."/>
            <person name="Jones C."/>
            <person name="Hall R.E."/>
            <person name="Andrews T.D."/>
            <person name="Lloyd C."/>
            <person name="Ainscough R."/>
            <person name="Almeida J.P."/>
            <person name="Ambrose K.D."/>
            <person name="Anderson F."/>
            <person name="Andrew R.W."/>
            <person name="Ashwell R.I.S."/>
            <person name="Aubin K."/>
            <person name="Babbage A.K."/>
            <person name="Bagguley C.L."/>
            <person name="Bailey J."/>
            <person name="Beasley H."/>
            <person name="Bethel G."/>
            <person name="Bird C.P."/>
            <person name="Bray-Allen S."/>
            <person name="Brown J.Y."/>
            <person name="Brown A.J."/>
            <person name="Buckley D."/>
            <person name="Burton J."/>
            <person name="Bye J."/>
            <person name="Carder C."/>
            <person name="Chapman J.C."/>
            <person name="Clark S.Y."/>
            <person name="Clarke G."/>
            <person name="Clee C."/>
            <person name="Cobley V."/>
            <person name="Collier R.E."/>
            <person name="Corby N."/>
            <person name="Coville G.J."/>
            <person name="Davies J."/>
            <person name="Deadman R."/>
            <person name="Dunn M."/>
            <person name="Earthrowl M."/>
            <person name="Ellington A.G."/>
            <person name="Errington H."/>
            <person name="Frankish A."/>
            <person name="Frankland J."/>
            <person name="French L."/>
            <person name="Garner P."/>
            <person name="Garnett J."/>
            <person name="Gay L."/>
            <person name="Ghori M.R.J."/>
            <person name="Gibson R."/>
            <person name="Gilby L.M."/>
            <person name="Gillett W."/>
            <person name="Glithero R.J."/>
            <person name="Grafham D.V."/>
            <person name="Griffiths C."/>
            <person name="Griffiths-Jones S."/>
            <person name="Grocock R."/>
            <person name="Hammond S."/>
            <person name="Harrison E.S.I."/>
            <person name="Hart E."/>
            <person name="Haugen E."/>
            <person name="Heath P.D."/>
            <person name="Holmes S."/>
            <person name="Holt K."/>
            <person name="Howden P.J."/>
            <person name="Hunt A.R."/>
            <person name="Hunt S.E."/>
            <person name="Hunter G."/>
            <person name="Isherwood J."/>
            <person name="James R."/>
            <person name="Johnson C."/>
            <person name="Johnson D."/>
            <person name="Joy A."/>
            <person name="Kay M."/>
            <person name="Kershaw J.K."/>
            <person name="Kibukawa M."/>
            <person name="Kimberley A.M."/>
            <person name="King A."/>
            <person name="Knights A.J."/>
            <person name="Lad H."/>
            <person name="Laird G."/>
            <person name="Lawlor S."/>
            <person name="Leongamornlert D.A."/>
            <person name="Lloyd D.M."/>
            <person name="Loveland J."/>
            <person name="Lovell J."/>
            <person name="Lush M.J."/>
            <person name="Lyne R."/>
            <person name="Martin S."/>
            <person name="Mashreghi-Mohammadi M."/>
            <person name="Matthews L."/>
            <person name="Matthews N.S.W."/>
            <person name="McLaren S."/>
            <person name="Milne S."/>
            <person name="Mistry S."/>
            <person name="Moore M.J.F."/>
            <person name="Nickerson T."/>
            <person name="O'Dell C.N."/>
            <person name="Oliver K."/>
            <person name="Palmeiri A."/>
            <person name="Palmer S.A."/>
            <person name="Parker A."/>
            <person name="Patel D."/>
            <person name="Pearce A.V."/>
            <person name="Peck A.I."/>
            <person name="Pelan S."/>
            <person name="Phelps K."/>
            <person name="Phillimore B.J."/>
            <person name="Plumb R."/>
            <person name="Rajan J."/>
            <person name="Raymond C."/>
            <person name="Rouse G."/>
            <person name="Saenphimmachak C."/>
            <person name="Sehra H.K."/>
            <person name="Sheridan E."/>
            <person name="Shownkeen R."/>
            <person name="Sims S."/>
            <person name="Skuce C.D."/>
            <person name="Smith M."/>
            <person name="Steward C."/>
            <person name="Subramanian S."/>
            <person name="Sycamore N."/>
            <person name="Tracey A."/>
            <person name="Tromans A."/>
            <person name="Van Helmond Z."/>
            <person name="Wall M."/>
            <person name="Wallis J.M."/>
            <person name="White S."/>
            <person name="Whitehead S.L."/>
            <person name="Wilkinson J.E."/>
            <person name="Willey D.L."/>
            <person name="Williams H."/>
            <person name="Wilming L."/>
            <person name="Wray P.W."/>
            <person name="Wu Z."/>
            <person name="Coulson A."/>
            <person name="Vaudin M."/>
            <person name="Sulston J.E."/>
            <person name="Durbin R.M."/>
            <person name="Hubbard T."/>
            <person name="Wooster R."/>
            <person name="Dunham I."/>
            <person name="Carter N.P."/>
            <person name="McVean G."/>
            <person name="Ross M.T."/>
            <person name="Harrow J."/>
            <person name="Olson M.V."/>
            <person name="Beck S."/>
            <person name="Rogers J."/>
            <person name="Bentley D.R."/>
        </authorList>
    </citation>
    <scope>NUCLEOTIDE SEQUENCE [LARGE SCALE GENOMIC DNA]</scope>
</reference>
<reference key="4">
    <citation type="submission" date="2005-07" db="EMBL/GenBank/DDBJ databases">
        <authorList>
            <person name="Mural R.J."/>
            <person name="Istrail S."/>
            <person name="Sutton G.G."/>
            <person name="Florea L."/>
            <person name="Halpern A.L."/>
            <person name="Mobarry C.M."/>
            <person name="Lippert R."/>
            <person name="Walenz B."/>
            <person name="Shatkay H."/>
            <person name="Dew I."/>
            <person name="Miller J.R."/>
            <person name="Flanigan M.J."/>
            <person name="Edwards N.J."/>
            <person name="Bolanos R."/>
            <person name="Fasulo D."/>
            <person name="Halldorsson B.V."/>
            <person name="Hannenhalli S."/>
            <person name="Turner R."/>
            <person name="Yooseph S."/>
            <person name="Lu F."/>
            <person name="Nusskern D.R."/>
            <person name="Shue B.C."/>
            <person name="Zheng X.H."/>
            <person name="Zhong F."/>
            <person name="Delcher A.L."/>
            <person name="Huson D.H."/>
            <person name="Kravitz S.A."/>
            <person name="Mouchard L."/>
            <person name="Reinert K."/>
            <person name="Remington K.A."/>
            <person name="Clark A.G."/>
            <person name="Waterman M.S."/>
            <person name="Eichler E.E."/>
            <person name="Adams M.D."/>
            <person name="Hunkapiller M.W."/>
            <person name="Myers E.W."/>
            <person name="Venter J.C."/>
        </authorList>
    </citation>
    <scope>NUCLEOTIDE SEQUENCE [LARGE SCALE GENOMIC DNA]</scope>
</reference>
<reference key="5">
    <citation type="journal article" date="2004" name="Genome Res.">
        <title>The status, quality, and expansion of the NIH full-length cDNA project: the Mammalian Gene Collection (MGC).</title>
        <authorList>
            <consortium name="The MGC Project Team"/>
        </authorList>
    </citation>
    <scope>NUCLEOTIDE SEQUENCE [LARGE SCALE MRNA]</scope>
    <source>
        <tissue>Eye</tissue>
    </source>
</reference>
<reference key="6">
    <citation type="journal article" date="2007" name="Mol. Endocrinol.">
        <title>Orphan receptor TR3 attenuates the p300-induced acetylation of retinoid X receptor-alpha.</title>
        <authorList>
            <person name="Zhao W.X."/>
            <person name="Tian M."/>
            <person name="Zhao B.X."/>
            <person name="Li G.D."/>
            <person name="Liu B."/>
            <person name="Zhan Y.Y."/>
            <person name="Chen H.Z."/>
            <person name="Wu Q."/>
        </authorList>
    </citation>
    <scope>ACETYLATION BY EP300</scope>
</reference>
<reference key="7">
    <citation type="journal article" date="2017" name="Proc. Natl. Acad. Sci. U.S.A.">
        <title>MicroRNA-10a is crucial for endothelial response to different flow patterns via interaction of retinoid acid receptors and histone deacetylases.</title>
        <authorList>
            <person name="Lee D.Y."/>
            <person name="Lin T.E."/>
            <person name="Lee C.I."/>
            <person name="Zhou J."/>
            <person name="Huang Y.H."/>
            <person name="Lee P.L."/>
            <person name="Shih Y.T."/>
            <person name="Chien S."/>
            <person name="Chiu J.J."/>
        </authorList>
    </citation>
    <scope>SUBCELLULAR LOCATION</scope>
    <scope>TISSUE SPECIFICITY</scope>
    <scope>INTERACTION WITH RARA</scope>
</reference>
<reference key="8">
    <citation type="submission" date="2006-04" db="PDB data bank">
        <title>Human retinoic acid receptor Rxr-gamma ligand-binding domain.</title>
        <authorList>
            <consortium name="Structural genomics consortium (SGC)"/>
        </authorList>
    </citation>
    <scope>X-RAY CRYSTALLOGRAPHY (2.4 ANGSTROMS) OF 227-463</scope>
</reference>